<keyword id="KW-0963">Cytoplasm</keyword>
<keyword id="KW-0378">Hydrolase</keyword>
<proteinExistence type="inferred from homology"/>
<name>URE3_HAEIG</name>
<organism>
    <name type="scientific">Haemophilus influenzae (strain PittGG)</name>
    <dbReference type="NCBI Taxonomy" id="374931"/>
    <lineage>
        <taxon>Bacteria</taxon>
        <taxon>Pseudomonadati</taxon>
        <taxon>Pseudomonadota</taxon>
        <taxon>Gammaproteobacteria</taxon>
        <taxon>Pasteurellales</taxon>
        <taxon>Pasteurellaceae</taxon>
        <taxon>Haemophilus</taxon>
    </lineage>
</organism>
<sequence>MHLTSREQEKLMLFLAGELAAKRKARGVKLNYPETVAYIASHLQEAARDGVSVAEVMQYGSTLLTVDDVMEGVAEMVHEVQIEATFPDGTKLVTVHNPIR</sequence>
<reference key="1">
    <citation type="journal article" date="2007" name="Genome Biol.">
        <title>Characterization and modeling of the Haemophilus influenzae core and supragenomes based on the complete genomic sequences of Rd and 12 clinical nontypeable strains.</title>
        <authorList>
            <person name="Hogg J.S."/>
            <person name="Hu F.Z."/>
            <person name="Janto B."/>
            <person name="Boissy R."/>
            <person name="Hayes J."/>
            <person name="Keefe R."/>
            <person name="Post J.C."/>
            <person name="Ehrlich G.D."/>
        </authorList>
    </citation>
    <scope>NUCLEOTIDE SEQUENCE [LARGE SCALE GENOMIC DNA]</scope>
    <source>
        <strain>PittGG</strain>
    </source>
</reference>
<feature type="chain" id="PRO_1000046329" description="Urease subunit gamma">
    <location>
        <begin position="1"/>
        <end position="100"/>
    </location>
</feature>
<protein>
    <recommendedName>
        <fullName evidence="1">Urease subunit gamma</fullName>
        <ecNumber evidence="1">3.5.1.5</ecNumber>
    </recommendedName>
    <alternativeName>
        <fullName evidence="1">Urea amidohydrolase subunit gamma</fullName>
    </alternativeName>
</protein>
<gene>
    <name evidence="1" type="primary">ureA</name>
    <name type="ordered locus">CGSHiGG_05965</name>
</gene>
<accession>A5UH46</accession>
<dbReference type="EC" id="3.5.1.5" evidence="1"/>
<dbReference type="EMBL" id="CP000672">
    <property type="protein sequence ID" value="ABR00102.1"/>
    <property type="molecule type" value="Genomic_DNA"/>
</dbReference>
<dbReference type="SMR" id="A5UH46"/>
<dbReference type="KEGG" id="hiq:CGSHiGG_05965"/>
<dbReference type="HOGENOM" id="CLU_145825_1_0_6"/>
<dbReference type="UniPathway" id="UPA00258">
    <property type="reaction ID" value="UER00370"/>
</dbReference>
<dbReference type="Proteomes" id="UP000001990">
    <property type="component" value="Chromosome"/>
</dbReference>
<dbReference type="GO" id="GO:0005737">
    <property type="term" value="C:cytoplasm"/>
    <property type="evidence" value="ECO:0007669"/>
    <property type="project" value="UniProtKB-SubCell"/>
</dbReference>
<dbReference type="GO" id="GO:0016151">
    <property type="term" value="F:nickel cation binding"/>
    <property type="evidence" value="ECO:0007669"/>
    <property type="project" value="InterPro"/>
</dbReference>
<dbReference type="GO" id="GO:0009039">
    <property type="term" value="F:urease activity"/>
    <property type="evidence" value="ECO:0007669"/>
    <property type="project" value="UniProtKB-UniRule"/>
</dbReference>
<dbReference type="GO" id="GO:0043419">
    <property type="term" value="P:urea catabolic process"/>
    <property type="evidence" value="ECO:0007669"/>
    <property type="project" value="UniProtKB-UniRule"/>
</dbReference>
<dbReference type="CDD" id="cd00390">
    <property type="entry name" value="Urease_gamma"/>
    <property type="match status" value="1"/>
</dbReference>
<dbReference type="Gene3D" id="3.30.280.10">
    <property type="entry name" value="Urease, gamma-like subunit"/>
    <property type="match status" value="1"/>
</dbReference>
<dbReference type="HAMAP" id="MF_00739">
    <property type="entry name" value="Urease_gamma"/>
    <property type="match status" value="1"/>
</dbReference>
<dbReference type="InterPro" id="IPR012010">
    <property type="entry name" value="Urease_gamma"/>
</dbReference>
<dbReference type="InterPro" id="IPR002026">
    <property type="entry name" value="Urease_gamma/gamma-beta_su"/>
</dbReference>
<dbReference type="InterPro" id="IPR036463">
    <property type="entry name" value="Urease_gamma_sf"/>
</dbReference>
<dbReference type="InterPro" id="IPR050069">
    <property type="entry name" value="Urease_subunit"/>
</dbReference>
<dbReference type="NCBIfam" id="NF009712">
    <property type="entry name" value="PRK13241.1"/>
    <property type="match status" value="1"/>
</dbReference>
<dbReference type="NCBIfam" id="TIGR00193">
    <property type="entry name" value="urease_gam"/>
    <property type="match status" value="1"/>
</dbReference>
<dbReference type="PANTHER" id="PTHR33569">
    <property type="entry name" value="UREASE"/>
    <property type="match status" value="1"/>
</dbReference>
<dbReference type="PANTHER" id="PTHR33569:SF1">
    <property type="entry name" value="UREASE"/>
    <property type="match status" value="1"/>
</dbReference>
<dbReference type="Pfam" id="PF00547">
    <property type="entry name" value="Urease_gamma"/>
    <property type="match status" value="1"/>
</dbReference>
<dbReference type="PIRSF" id="PIRSF001223">
    <property type="entry name" value="Urease_gamma"/>
    <property type="match status" value="1"/>
</dbReference>
<dbReference type="SUPFAM" id="SSF54111">
    <property type="entry name" value="Urease, gamma-subunit"/>
    <property type="match status" value="1"/>
</dbReference>
<comment type="catalytic activity">
    <reaction evidence="1">
        <text>urea + 2 H2O + H(+) = hydrogencarbonate + 2 NH4(+)</text>
        <dbReference type="Rhea" id="RHEA:20557"/>
        <dbReference type="ChEBI" id="CHEBI:15377"/>
        <dbReference type="ChEBI" id="CHEBI:15378"/>
        <dbReference type="ChEBI" id="CHEBI:16199"/>
        <dbReference type="ChEBI" id="CHEBI:17544"/>
        <dbReference type="ChEBI" id="CHEBI:28938"/>
        <dbReference type="EC" id="3.5.1.5"/>
    </reaction>
</comment>
<comment type="pathway">
    <text evidence="1">Nitrogen metabolism; urea degradation; CO(2) and NH(3) from urea (urease route): step 1/1.</text>
</comment>
<comment type="subunit">
    <text evidence="1">Heterotrimer of UreA (gamma), UreB (beta) and UreC (alpha) subunits. Three heterotrimers associate to form the active enzyme.</text>
</comment>
<comment type="subcellular location">
    <subcellularLocation>
        <location evidence="1">Cytoplasm</location>
    </subcellularLocation>
</comment>
<comment type="similarity">
    <text evidence="1">Belongs to the urease gamma subunit family.</text>
</comment>
<evidence type="ECO:0000255" key="1">
    <source>
        <dbReference type="HAMAP-Rule" id="MF_00739"/>
    </source>
</evidence>